<comment type="function">
    <text evidence="1">Involved in the anomeric conversion of L-rhamnose.</text>
</comment>
<comment type="catalytic activity">
    <reaction evidence="1">
        <text>alpha-L-rhamnose = beta-L-rhamnose</text>
        <dbReference type="Rhea" id="RHEA:25584"/>
        <dbReference type="ChEBI" id="CHEBI:27586"/>
        <dbReference type="ChEBI" id="CHEBI:27907"/>
        <dbReference type="EC" id="5.1.3.32"/>
    </reaction>
</comment>
<comment type="pathway">
    <text evidence="1">Carbohydrate metabolism; L-rhamnose metabolism.</text>
</comment>
<comment type="subunit">
    <text evidence="1">Homodimer.</text>
</comment>
<comment type="subcellular location">
    <subcellularLocation>
        <location evidence="1">Cytoplasm</location>
    </subcellularLocation>
</comment>
<comment type="similarity">
    <text evidence="1">Belongs to the rhamnose mutarotase family.</text>
</comment>
<organism>
    <name type="scientific">Salmonella paratyphi B (strain ATCC BAA-1250 / SPB7)</name>
    <dbReference type="NCBI Taxonomy" id="1016998"/>
    <lineage>
        <taxon>Bacteria</taxon>
        <taxon>Pseudomonadati</taxon>
        <taxon>Pseudomonadota</taxon>
        <taxon>Gammaproteobacteria</taxon>
        <taxon>Enterobacterales</taxon>
        <taxon>Enterobacteriaceae</taxon>
        <taxon>Salmonella</taxon>
    </lineage>
</organism>
<name>RHAM_SALPB</name>
<dbReference type="EC" id="5.1.3.32" evidence="1"/>
<dbReference type="EMBL" id="CP000886">
    <property type="protein sequence ID" value="ABX70300.1"/>
    <property type="molecule type" value="Genomic_DNA"/>
</dbReference>
<dbReference type="RefSeq" id="WP_000619478.1">
    <property type="nucleotide sequence ID" value="NC_010102.1"/>
</dbReference>
<dbReference type="SMR" id="A9MZC2"/>
<dbReference type="KEGG" id="spq:SPAB_05009"/>
<dbReference type="PATRIC" id="fig|1016998.12.peg.4701"/>
<dbReference type="HOGENOM" id="CLU_100689_2_0_6"/>
<dbReference type="BioCyc" id="SENT1016998:SPAB_RS20380-MONOMER"/>
<dbReference type="UniPathway" id="UPA00125"/>
<dbReference type="Proteomes" id="UP000008556">
    <property type="component" value="Chromosome"/>
</dbReference>
<dbReference type="GO" id="GO:0005737">
    <property type="term" value="C:cytoplasm"/>
    <property type="evidence" value="ECO:0007669"/>
    <property type="project" value="UniProtKB-SubCell"/>
</dbReference>
<dbReference type="GO" id="GO:0062192">
    <property type="term" value="F:L-rhamnose mutarotase activity"/>
    <property type="evidence" value="ECO:0007669"/>
    <property type="project" value="UniProtKB-EC"/>
</dbReference>
<dbReference type="GO" id="GO:0019301">
    <property type="term" value="P:rhamnose catabolic process"/>
    <property type="evidence" value="ECO:0007669"/>
    <property type="project" value="TreeGrafter"/>
</dbReference>
<dbReference type="Gene3D" id="3.30.70.100">
    <property type="match status" value="1"/>
</dbReference>
<dbReference type="HAMAP" id="MF_01663">
    <property type="entry name" value="L_rham_rotase"/>
    <property type="match status" value="1"/>
</dbReference>
<dbReference type="InterPro" id="IPR011008">
    <property type="entry name" value="Dimeric_a/b-barrel"/>
</dbReference>
<dbReference type="InterPro" id="IPR013448">
    <property type="entry name" value="L-rhamnose_mutarotase"/>
</dbReference>
<dbReference type="InterPro" id="IPR008000">
    <property type="entry name" value="Rham/fucose_mutarotase"/>
</dbReference>
<dbReference type="NCBIfam" id="TIGR02625">
    <property type="entry name" value="YiiL_rotase"/>
    <property type="match status" value="1"/>
</dbReference>
<dbReference type="PANTHER" id="PTHR34389">
    <property type="entry name" value="L-RHAMNOSE MUTAROTASE"/>
    <property type="match status" value="1"/>
</dbReference>
<dbReference type="PANTHER" id="PTHR34389:SF2">
    <property type="entry name" value="L-RHAMNOSE MUTAROTASE"/>
    <property type="match status" value="1"/>
</dbReference>
<dbReference type="Pfam" id="PF05336">
    <property type="entry name" value="rhaM"/>
    <property type="match status" value="1"/>
</dbReference>
<dbReference type="SUPFAM" id="SSF54909">
    <property type="entry name" value="Dimeric alpha+beta barrel"/>
    <property type="match status" value="1"/>
</dbReference>
<protein>
    <recommendedName>
        <fullName evidence="1">L-rhamnose mutarotase</fullName>
        <ecNumber evidence="1">5.1.3.32</ecNumber>
    </recommendedName>
    <alternativeName>
        <fullName evidence="1">Rhamnose 1-epimerase</fullName>
    </alternativeName>
    <alternativeName>
        <fullName evidence="1">Type-3 mutarotase</fullName>
    </alternativeName>
</protein>
<accession>A9MZC2</accession>
<sequence>MIRKAFVMQVNADAHEEYQRRHNPIWPELEAVLKSHGAHHYAIYLDQERNLLFATVEIESEERWNAVASTDVCQRWWKHMRDVMPANPDNSPVSAELKEVFYLQ</sequence>
<reference key="1">
    <citation type="submission" date="2007-11" db="EMBL/GenBank/DDBJ databases">
        <authorList>
            <consortium name="The Salmonella enterica serovar Paratyphi B Genome Sequencing Project"/>
            <person name="McClelland M."/>
            <person name="Sanderson E.K."/>
            <person name="Porwollik S."/>
            <person name="Spieth J."/>
            <person name="Clifton W.S."/>
            <person name="Fulton R."/>
            <person name="Cordes M."/>
            <person name="Wollam A."/>
            <person name="Shah N."/>
            <person name="Pepin K."/>
            <person name="Bhonagiri V."/>
            <person name="Nash W."/>
            <person name="Johnson M."/>
            <person name="Thiruvilangam P."/>
            <person name="Wilson R."/>
        </authorList>
    </citation>
    <scope>NUCLEOTIDE SEQUENCE [LARGE SCALE GENOMIC DNA]</scope>
    <source>
        <strain>ATCC BAA-1250 / SPB7</strain>
    </source>
</reference>
<gene>
    <name evidence="1" type="primary">rhaM</name>
    <name type="ordered locus">SPAB_05009</name>
</gene>
<proteinExistence type="inferred from homology"/>
<keyword id="KW-0119">Carbohydrate metabolism</keyword>
<keyword id="KW-0963">Cytoplasm</keyword>
<keyword id="KW-0413">Isomerase</keyword>
<keyword id="KW-0684">Rhamnose metabolism</keyword>
<feature type="chain" id="PRO_0000344601" description="L-rhamnose mutarotase">
    <location>
        <begin position="1"/>
        <end position="104"/>
    </location>
</feature>
<feature type="active site" description="Proton donor" evidence="1">
    <location>
        <position position="22"/>
    </location>
</feature>
<feature type="binding site" evidence="1">
    <location>
        <position position="18"/>
    </location>
    <ligand>
        <name>substrate</name>
    </ligand>
</feature>
<feature type="binding site" evidence="1">
    <location>
        <position position="41"/>
    </location>
    <ligand>
        <name>substrate</name>
    </ligand>
</feature>
<feature type="binding site" evidence="1">
    <location>
        <begin position="76"/>
        <end position="77"/>
    </location>
    <ligand>
        <name>substrate</name>
    </ligand>
</feature>
<evidence type="ECO:0000255" key="1">
    <source>
        <dbReference type="HAMAP-Rule" id="MF_01663"/>
    </source>
</evidence>